<name>RL5_SYNY3</name>
<gene>
    <name evidence="1" type="primary">rplE</name>
    <name evidence="1" type="synonym">rpl5</name>
    <name type="ordered locus">sll1808</name>
</gene>
<keyword id="KW-1185">Reference proteome</keyword>
<keyword id="KW-0687">Ribonucleoprotein</keyword>
<keyword id="KW-0689">Ribosomal protein</keyword>
<keyword id="KW-0694">RNA-binding</keyword>
<keyword id="KW-0699">rRNA-binding</keyword>
<keyword id="KW-0820">tRNA-binding</keyword>
<evidence type="ECO:0000255" key="1">
    <source>
        <dbReference type="HAMAP-Rule" id="MF_01333"/>
    </source>
</evidence>
<evidence type="ECO:0000305" key="2"/>
<accession>P73308</accession>
<proteinExistence type="inferred from homology"/>
<feature type="chain" id="PRO_0000125010" description="Large ribosomal subunit protein uL5">
    <location>
        <begin position="1"/>
        <end position="180"/>
    </location>
</feature>
<reference key="1">
    <citation type="journal article" date="1996" name="DNA Res.">
        <title>Sequence analysis of the genome of the unicellular cyanobacterium Synechocystis sp. strain PCC6803. II. Sequence determination of the entire genome and assignment of potential protein-coding regions.</title>
        <authorList>
            <person name="Kaneko T."/>
            <person name="Sato S."/>
            <person name="Kotani H."/>
            <person name="Tanaka A."/>
            <person name="Asamizu E."/>
            <person name="Nakamura Y."/>
            <person name="Miyajima N."/>
            <person name="Hirosawa M."/>
            <person name="Sugiura M."/>
            <person name="Sasamoto S."/>
            <person name="Kimura T."/>
            <person name="Hosouchi T."/>
            <person name="Matsuno A."/>
            <person name="Muraki A."/>
            <person name="Nakazaki N."/>
            <person name="Naruo K."/>
            <person name="Okumura S."/>
            <person name="Shimpo S."/>
            <person name="Takeuchi C."/>
            <person name="Wada T."/>
            <person name="Watanabe A."/>
            <person name="Yamada M."/>
            <person name="Yasuda M."/>
            <person name="Tabata S."/>
        </authorList>
    </citation>
    <scope>NUCLEOTIDE SEQUENCE [LARGE SCALE GENOMIC DNA]</scope>
    <source>
        <strain>ATCC 27184 / PCC 6803 / Kazusa</strain>
    </source>
</reference>
<dbReference type="EMBL" id="BA000022">
    <property type="protein sequence ID" value="BAA17337.1"/>
    <property type="status" value="ALT_INIT"/>
    <property type="molecule type" value="Genomic_DNA"/>
</dbReference>
<dbReference type="PIR" id="S77490">
    <property type="entry name" value="S77490"/>
</dbReference>
<dbReference type="SMR" id="P73308"/>
<dbReference type="FunCoup" id="P73308">
    <property type="interactions" value="477"/>
</dbReference>
<dbReference type="IntAct" id="P73308">
    <property type="interactions" value="1"/>
</dbReference>
<dbReference type="STRING" id="1148.gene:10498200"/>
<dbReference type="PaxDb" id="1148-1652415"/>
<dbReference type="EnsemblBacteria" id="BAA17337">
    <property type="protein sequence ID" value="BAA17337"/>
    <property type="gene ID" value="BAA17337"/>
</dbReference>
<dbReference type="KEGG" id="syn:sll1808"/>
<dbReference type="eggNOG" id="COG0094">
    <property type="taxonomic scope" value="Bacteria"/>
</dbReference>
<dbReference type="InParanoid" id="P73308"/>
<dbReference type="PhylomeDB" id="P73308"/>
<dbReference type="Proteomes" id="UP000001425">
    <property type="component" value="Chromosome"/>
</dbReference>
<dbReference type="GO" id="GO:0022625">
    <property type="term" value="C:cytosolic large ribosomal subunit"/>
    <property type="evidence" value="ECO:0000318"/>
    <property type="project" value="GO_Central"/>
</dbReference>
<dbReference type="GO" id="GO:0003723">
    <property type="term" value="F:RNA binding"/>
    <property type="evidence" value="ECO:0000318"/>
    <property type="project" value="GO_Central"/>
</dbReference>
<dbReference type="GO" id="GO:0019843">
    <property type="term" value="F:rRNA binding"/>
    <property type="evidence" value="ECO:0007669"/>
    <property type="project" value="UniProtKB-UniRule"/>
</dbReference>
<dbReference type="GO" id="GO:0003735">
    <property type="term" value="F:structural constituent of ribosome"/>
    <property type="evidence" value="ECO:0000318"/>
    <property type="project" value="GO_Central"/>
</dbReference>
<dbReference type="GO" id="GO:0000049">
    <property type="term" value="F:tRNA binding"/>
    <property type="evidence" value="ECO:0007669"/>
    <property type="project" value="UniProtKB-UniRule"/>
</dbReference>
<dbReference type="GO" id="GO:0006412">
    <property type="term" value="P:translation"/>
    <property type="evidence" value="ECO:0000318"/>
    <property type="project" value="GO_Central"/>
</dbReference>
<dbReference type="FunFam" id="3.30.1440.10:FF:000001">
    <property type="entry name" value="50S ribosomal protein L5"/>
    <property type="match status" value="1"/>
</dbReference>
<dbReference type="Gene3D" id="3.30.1440.10">
    <property type="match status" value="1"/>
</dbReference>
<dbReference type="HAMAP" id="MF_01333_B">
    <property type="entry name" value="Ribosomal_uL5_B"/>
    <property type="match status" value="1"/>
</dbReference>
<dbReference type="InterPro" id="IPR002132">
    <property type="entry name" value="Ribosomal_uL5"/>
</dbReference>
<dbReference type="InterPro" id="IPR020930">
    <property type="entry name" value="Ribosomal_uL5_bac-type"/>
</dbReference>
<dbReference type="InterPro" id="IPR031309">
    <property type="entry name" value="Ribosomal_uL5_C"/>
</dbReference>
<dbReference type="InterPro" id="IPR020929">
    <property type="entry name" value="Ribosomal_uL5_CS"/>
</dbReference>
<dbReference type="InterPro" id="IPR022803">
    <property type="entry name" value="Ribosomal_uL5_dom_sf"/>
</dbReference>
<dbReference type="InterPro" id="IPR031310">
    <property type="entry name" value="Ribosomal_uL5_N"/>
</dbReference>
<dbReference type="NCBIfam" id="NF000585">
    <property type="entry name" value="PRK00010.1"/>
    <property type="match status" value="1"/>
</dbReference>
<dbReference type="PANTHER" id="PTHR11994">
    <property type="entry name" value="60S RIBOSOMAL PROTEIN L11-RELATED"/>
    <property type="match status" value="1"/>
</dbReference>
<dbReference type="Pfam" id="PF00281">
    <property type="entry name" value="Ribosomal_L5"/>
    <property type="match status" value="1"/>
</dbReference>
<dbReference type="Pfam" id="PF00673">
    <property type="entry name" value="Ribosomal_L5_C"/>
    <property type="match status" value="1"/>
</dbReference>
<dbReference type="PIRSF" id="PIRSF002161">
    <property type="entry name" value="Ribosomal_L5"/>
    <property type="match status" value="1"/>
</dbReference>
<dbReference type="SUPFAM" id="SSF55282">
    <property type="entry name" value="RL5-like"/>
    <property type="match status" value="1"/>
</dbReference>
<dbReference type="PROSITE" id="PS00358">
    <property type="entry name" value="RIBOSOMAL_L5"/>
    <property type="match status" value="1"/>
</dbReference>
<protein>
    <recommendedName>
        <fullName evidence="1">Large ribosomal subunit protein uL5</fullName>
    </recommendedName>
    <alternativeName>
        <fullName evidence="2">50S ribosomal protein L5</fullName>
    </alternativeName>
</protein>
<comment type="function">
    <text evidence="1">This is one of the proteins that bind and probably mediate the attachment of the 5S RNA into the large ribosomal subunit, where it forms part of the central protuberance. In the 70S ribosome it contacts protein S13 of the 30S subunit (bridge B1b), connecting the 2 subunits; this bridge is implicated in subunit movement. Contacts the P site tRNA; the 5S rRNA and some of its associated proteins might help stabilize positioning of ribosome-bound tRNAs.</text>
</comment>
<comment type="subunit">
    <text evidence="1">Part of the 50S ribosomal subunit; part of the 5S rRNA/L5/L18/L25 subcomplex. Contacts the 5S rRNA and the P site tRNA. Forms a bridge to the 30S subunit in the 70S ribosome.</text>
</comment>
<comment type="similarity">
    <text evidence="1">Belongs to the universal ribosomal protein uL5 family.</text>
</comment>
<comment type="sequence caution" evidence="2">
    <conflict type="erroneous initiation">
        <sequence resource="EMBL-CDS" id="BAA17337"/>
    </conflict>
</comment>
<organism>
    <name type="scientific">Synechocystis sp. (strain ATCC 27184 / PCC 6803 / Kazusa)</name>
    <dbReference type="NCBI Taxonomy" id="1111708"/>
    <lineage>
        <taxon>Bacteria</taxon>
        <taxon>Bacillati</taxon>
        <taxon>Cyanobacteriota</taxon>
        <taxon>Cyanophyceae</taxon>
        <taxon>Synechococcales</taxon>
        <taxon>Merismopediaceae</taxon>
        <taxon>Synechocystis</taxon>
    </lineage>
</organism>
<sequence>MTQRLKTLYQETILPKLQEEFGYKNIHQVPKLTKVTVNRGLGEASQNAKALESSLTELATITGQKPVVTRARKAIAGFKIREGMPVGVMVTLRSERMYAFLDRLINLALPRIRDFRGISPNSFDGRGNYSLGIREQLIFPEIDYDTIDQIRGMDVSIITSAQTDEEGRALLKALGMPFRS</sequence>